<evidence type="ECO:0000250" key="1"/>
<evidence type="ECO:0000255" key="2"/>
<evidence type="ECO:0000305" key="3"/>
<evidence type="ECO:0007829" key="4">
    <source>
        <dbReference type="PDB" id="3RK4"/>
    </source>
</evidence>
<evidence type="ECO:0007829" key="5">
    <source>
        <dbReference type="PDB" id="5FLK"/>
    </source>
</evidence>
<evidence type="ECO:0007829" key="6">
    <source>
        <dbReference type="PDB" id="6XTC"/>
    </source>
</evidence>
<gene>
    <name type="primary">dhaA</name>
</gene>
<geneLocation type="plasmid">
    <name>pRTL1</name>
</geneLocation>
<name>DHAA_RHORH</name>
<dbReference type="EC" id="3.8.1.5"/>
<dbReference type="EMBL" id="AF060871">
    <property type="protein sequence ID" value="AAC15838.1"/>
    <property type="molecule type" value="Genomic_DNA"/>
</dbReference>
<dbReference type="PDB" id="2V9Z">
    <property type="method" value="X-ray"/>
    <property type="resolution" value="3.00 A"/>
    <property type="chains" value="A=1-293"/>
</dbReference>
<dbReference type="PDB" id="3FBW">
    <property type="method" value="X-ray"/>
    <property type="resolution" value="1.23 A"/>
    <property type="chains" value="A=1-293"/>
</dbReference>
<dbReference type="PDB" id="3RK4">
    <property type="method" value="X-ray"/>
    <property type="resolution" value="1.31 A"/>
    <property type="chains" value="A=1-293"/>
</dbReference>
<dbReference type="PDB" id="3SK0">
    <property type="method" value="X-ray"/>
    <property type="resolution" value="1.78 A"/>
    <property type="chains" value="A=1-293"/>
</dbReference>
<dbReference type="PDB" id="4E46">
    <property type="method" value="X-ray"/>
    <property type="resolution" value="1.26 A"/>
    <property type="chains" value="A=1-293"/>
</dbReference>
<dbReference type="PDB" id="4F5Z">
    <property type="method" value="X-ray"/>
    <property type="resolution" value="1.20 A"/>
    <property type="chains" value="A=1-293"/>
</dbReference>
<dbReference type="PDB" id="4F60">
    <property type="method" value="X-ray"/>
    <property type="resolution" value="1.45 A"/>
    <property type="chains" value="A=1-293"/>
</dbReference>
<dbReference type="PDB" id="4FWB">
    <property type="method" value="X-ray"/>
    <property type="resolution" value="1.26 A"/>
    <property type="chains" value="A=4-293"/>
</dbReference>
<dbReference type="PDB" id="4WCV">
    <property type="method" value="X-ray"/>
    <property type="resolution" value="1.69 A"/>
    <property type="chains" value="A=1-293"/>
</dbReference>
<dbReference type="PDB" id="5FLK">
    <property type="method" value="X-ray"/>
    <property type="resolution" value="0.99 A"/>
    <property type="chains" value="A=1-293"/>
</dbReference>
<dbReference type="PDB" id="5UXZ">
    <property type="method" value="X-ray"/>
    <property type="resolution" value="1.92 A"/>
    <property type="chains" value="A/B=4-290"/>
</dbReference>
<dbReference type="PDB" id="5UY1">
    <property type="method" value="X-ray"/>
    <property type="resolution" value="1.35 A"/>
    <property type="chains" value="A/B=4-290"/>
</dbReference>
<dbReference type="PDB" id="5VNP">
    <property type="method" value="X-ray"/>
    <property type="resolution" value="2.23 A"/>
    <property type="chains" value="A/B=4-293"/>
</dbReference>
<dbReference type="PDB" id="6SP5">
    <property type="method" value="X-ray"/>
    <property type="resolution" value="1.60 A"/>
    <property type="chains" value="A/B=3-293"/>
</dbReference>
<dbReference type="PDB" id="6SP8">
    <property type="method" value="X-ray"/>
    <property type="resolution" value="1.55 A"/>
    <property type="chains" value="A/B=3-293"/>
</dbReference>
<dbReference type="PDB" id="6TY7">
    <property type="method" value="X-ray"/>
    <property type="resolution" value="1.50 A"/>
    <property type="chains" value="A/B=1-293"/>
</dbReference>
<dbReference type="PDB" id="6XT8">
    <property type="method" value="X-ray"/>
    <property type="resolution" value="1.70 A"/>
    <property type="chains" value="A/B/C/D=1-293"/>
</dbReference>
<dbReference type="PDB" id="6XTC">
    <property type="method" value="X-ray"/>
    <property type="resolution" value="2.54 A"/>
    <property type="chains" value="A/B/C/D=1-293"/>
</dbReference>
<dbReference type="PDB" id="7O3O">
    <property type="method" value="X-ray"/>
    <property type="resolution" value="1.25 A"/>
    <property type="chains" value="A=1-293"/>
</dbReference>
<dbReference type="PDB" id="7O8B">
    <property type="method" value="X-ray"/>
    <property type="resolution" value="1.75 A"/>
    <property type="chains" value="A=4-293"/>
</dbReference>
<dbReference type="PDBsum" id="2V9Z"/>
<dbReference type="PDBsum" id="3FBW"/>
<dbReference type="PDBsum" id="3RK4"/>
<dbReference type="PDBsum" id="3SK0"/>
<dbReference type="PDBsum" id="4E46"/>
<dbReference type="PDBsum" id="4F5Z"/>
<dbReference type="PDBsum" id="4F60"/>
<dbReference type="PDBsum" id="4FWB"/>
<dbReference type="PDBsum" id="4WCV"/>
<dbReference type="PDBsum" id="5FLK"/>
<dbReference type="PDBsum" id="5UXZ"/>
<dbReference type="PDBsum" id="5UY1"/>
<dbReference type="PDBsum" id="5VNP"/>
<dbReference type="PDBsum" id="6SP5"/>
<dbReference type="PDBsum" id="6SP8"/>
<dbReference type="PDBsum" id="6TY7"/>
<dbReference type="PDBsum" id="6XT8"/>
<dbReference type="PDBsum" id="6XTC"/>
<dbReference type="PDBsum" id="7O3O"/>
<dbReference type="PDBsum" id="7O8B"/>
<dbReference type="SMR" id="P0A3G2"/>
<dbReference type="ESTHER" id="rhoso-halo1">
    <property type="family name" value="Haloalkane_dehalogenase-HLD2"/>
</dbReference>
<dbReference type="BRENDA" id="3.8.1.5">
    <property type="organism ID" value="5395"/>
</dbReference>
<dbReference type="SABIO-RK" id="P0A3G2"/>
<dbReference type="UniPathway" id="UPA00007"/>
<dbReference type="EvolutionaryTrace" id="P0A3G2"/>
<dbReference type="GO" id="GO:0016020">
    <property type="term" value="C:membrane"/>
    <property type="evidence" value="ECO:0007669"/>
    <property type="project" value="TreeGrafter"/>
</dbReference>
<dbReference type="GO" id="GO:0018786">
    <property type="term" value="F:haloalkane dehalogenase activity"/>
    <property type="evidence" value="ECO:0007669"/>
    <property type="project" value="UniProtKB-UniRule"/>
</dbReference>
<dbReference type="GO" id="GO:0009636">
    <property type="term" value="P:response to toxic substance"/>
    <property type="evidence" value="ECO:0007669"/>
    <property type="project" value="UniProtKB-KW"/>
</dbReference>
<dbReference type="Gene3D" id="3.40.50.1820">
    <property type="entry name" value="alpha/beta hydrolase"/>
    <property type="match status" value="1"/>
</dbReference>
<dbReference type="HAMAP" id="MF_01231">
    <property type="entry name" value="Haloalk_dehal_type2"/>
    <property type="match status" value="1"/>
</dbReference>
<dbReference type="InterPro" id="IPR000073">
    <property type="entry name" value="AB_hydrolase_1"/>
</dbReference>
<dbReference type="InterPro" id="IPR029058">
    <property type="entry name" value="AB_hydrolase_fold"/>
</dbReference>
<dbReference type="InterPro" id="IPR050266">
    <property type="entry name" value="AB_hydrolase_sf"/>
</dbReference>
<dbReference type="InterPro" id="IPR000639">
    <property type="entry name" value="Epox_hydrolase-like"/>
</dbReference>
<dbReference type="InterPro" id="IPR023594">
    <property type="entry name" value="Haloalkane_dehalogenase_2"/>
</dbReference>
<dbReference type="NCBIfam" id="NF002938">
    <property type="entry name" value="PRK03592.1"/>
    <property type="match status" value="1"/>
</dbReference>
<dbReference type="PANTHER" id="PTHR43798:SF24">
    <property type="entry name" value="CIS-3-ALKYL-4-ALKYLOXETAN-2-ONE DECARBOXYLASE"/>
    <property type="match status" value="1"/>
</dbReference>
<dbReference type="PANTHER" id="PTHR43798">
    <property type="entry name" value="MONOACYLGLYCEROL LIPASE"/>
    <property type="match status" value="1"/>
</dbReference>
<dbReference type="Pfam" id="PF00561">
    <property type="entry name" value="Abhydrolase_1"/>
    <property type="match status" value="1"/>
</dbReference>
<dbReference type="PRINTS" id="PR00412">
    <property type="entry name" value="EPOXHYDRLASE"/>
</dbReference>
<dbReference type="SUPFAM" id="SSF53474">
    <property type="entry name" value="alpha/beta-Hydrolases"/>
    <property type="match status" value="1"/>
</dbReference>
<reference key="1">
    <citation type="journal article" date="1997" name="Microbiology">
        <title>The plasmid-located haloalkane dehalogenase gene from Rhodococcus rhodochrous NCIMB 13064.</title>
        <authorList>
            <person name="Kulakova A.N."/>
            <person name="Larkin M.J."/>
            <person name="Kulakov L.A."/>
        </authorList>
    </citation>
    <scope>NUCLEOTIDE SEQUENCE [GENOMIC DNA]</scope>
    <source>
        <strain>NCIMB 13064</strain>
    </source>
</reference>
<organism>
    <name type="scientific">Rhodococcus rhodochrous</name>
    <dbReference type="NCBI Taxonomy" id="1829"/>
    <lineage>
        <taxon>Bacteria</taxon>
        <taxon>Bacillati</taxon>
        <taxon>Actinomycetota</taxon>
        <taxon>Actinomycetes</taxon>
        <taxon>Mycobacteriales</taxon>
        <taxon>Nocardiaceae</taxon>
        <taxon>Rhodococcus</taxon>
    </lineage>
</organism>
<accession>P0A3G2</accession>
<accession>Q53042</accession>
<sequence>MSEIGTGFPFDPHYVEVLGERMHYVDVGPRDGTPVLFLHGNPTSSYLWRNIIPHVAPSHRCIAPDLIGMGKSDKPDLDYFFDDHVRYLDAFIEALGLEEVVLVIHDWGSALGFHWAKRNPERVKGIACMEFIRPIPTWDEWPEFARETFQAFRTADVGRELIIDQNAFIEGALPKCVVRPLTEVEMDHYREPFLKPVDREPLWRFPNELPIAGEPANIVALVEAYMNWLHQSPVPKLLFWGTPGVLIPPAEAARLAESLPNCKTVDIGPGLHYLQEDNPDLIGSEIARWLPAL</sequence>
<comment type="function">
    <text>Catalyzes hydrolytic cleavage of carbon-halogen bonds in halogenated aliphatic compounds, leading to the formation of the corresponding primary alcohols, halide ions and protons. Expresses halogenase activity against 1-chloroalkanes of chain length C3 to C10, and also shows a very weak activity with 1,2-dichloroethane.</text>
</comment>
<comment type="catalytic activity">
    <reaction>
        <text>1-haloalkane + H2O = a halide anion + a primary alcohol + H(+)</text>
        <dbReference type="Rhea" id="RHEA:19081"/>
        <dbReference type="ChEBI" id="CHEBI:15377"/>
        <dbReference type="ChEBI" id="CHEBI:15378"/>
        <dbReference type="ChEBI" id="CHEBI:15734"/>
        <dbReference type="ChEBI" id="CHEBI:16042"/>
        <dbReference type="ChEBI" id="CHEBI:18060"/>
        <dbReference type="EC" id="3.8.1.5"/>
    </reaction>
</comment>
<comment type="pathway">
    <text>Xenobiotic degradation; haloalkane degradation.</text>
</comment>
<comment type="subunit">
    <text>Monomer.</text>
</comment>
<comment type="induction">
    <text>By 1-haloalkanes.</text>
</comment>
<comment type="similarity">
    <text evidence="3">Belongs to the haloalkane dehalogenase family. Type 2 subfamily.</text>
</comment>
<feature type="chain" id="PRO_0000216775" description="Haloalkane dehalogenase">
    <location>
        <begin position="1"/>
        <end position="293"/>
    </location>
</feature>
<feature type="domain" description="AB hydrolase-1" evidence="2">
    <location>
        <begin position="34"/>
        <end position="158"/>
    </location>
</feature>
<feature type="active site" description="Nucleophile" evidence="1">
    <location>
        <position position="106"/>
    </location>
</feature>
<feature type="active site" description="Proton donor" evidence="1">
    <location>
        <position position="130"/>
    </location>
</feature>
<feature type="active site" description="Proton acceptor" evidence="1">
    <location>
        <position position="272"/>
    </location>
</feature>
<feature type="strand" evidence="5">
    <location>
        <begin position="13"/>
        <end position="17"/>
    </location>
</feature>
<feature type="strand" evidence="5">
    <location>
        <begin position="20"/>
        <end position="28"/>
    </location>
</feature>
<feature type="strand" evidence="5">
    <location>
        <begin position="30"/>
        <end position="32"/>
    </location>
</feature>
<feature type="strand" evidence="5">
    <location>
        <begin position="35"/>
        <end position="38"/>
    </location>
</feature>
<feature type="helix" evidence="5">
    <location>
        <begin position="45"/>
        <end position="48"/>
    </location>
</feature>
<feature type="turn" evidence="5">
    <location>
        <begin position="49"/>
        <end position="51"/>
    </location>
</feature>
<feature type="helix" evidence="5">
    <location>
        <begin position="52"/>
        <end position="55"/>
    </location>
</feature>
<feature type="turn" evidence="5">
    <location>
        <begin position="56"/>
        <end position="58"/>
    </location>
</feature>
<feature type="strand" evidence="5">
    <location>
        <begin position="61"/>
        <end position="64"/>
    </location>
</feature>
<feature type="helix" evidence="5">
    <location>
        <begin position="81"/>
        <end position="94"/>
    </location>
</feature>
<feature type="strand" evidence="5">
    <location>
        <begin position="99"/>
        <end position="105"/>
    </location>
</feature>
<feature type="helix" evidence="5">
    <location>
        <begin position="106"/>
        <end position="118"/>
    </location>
</feature>
<feature type="helix" evidence="5">
    <location>
        <begin position="120"/>
        <end position="122"/>
    </location>
</feature>
<feature type="strand" evidence="5">
    <location>
        <begin position="123"/>
        <end position="130"/>
    </location>
</feature>
<feature type="strand" evidence="4">
    <location>
        <begin position="135"/>
        <end position="137"/>
    </location>
</feature>
<feature type="helix" evidence="5">
    <location>
        <begin position="138"/>
        <end position="140"/>
    </location>
</feature>
<feature type="helix" evidence="5">
    <location>
        <begin position="143"/>
        <end position="145"/>
    </location>
</feature>
<feature type="helix" evidence="5">
    <location>
        <begin position="146"/>
        <end position="152"/>
    </location>
</feature>
<feature type="strand" evidence="5">
    <location>
        <begin position="154"/>
        <end position="156"/>
    </location>
</feature>
<feature type="helix" evidence="5">
    <location>
        <begin position="157"/>
        <end position="162"/>
    </location>
</feature>
<feature type="turn" evidence="6">
    <location>
        <begin position="163"/>
        <end position="165"/>
    </location>
</feature>
<feature type="helix" evidence="5">
    <location>
        <begin position="167"/>
        <end position="170"/>
    </location>
</feature>
<feature type="helix" evidence="5">
    <location>
        <begin position="172"/>
        <end position="175"/>
    </location>
</feature>
<feature type="strand" evidence="5">
    <location>
        <begin position="177"/>
        <end position="179"/>
    </location>
</feature>
<feature type="helix" evidence="5">
    <location>
        <begin position="183"/>
        <end position="190"/>
    </location>
</feature>
<feature type="helix" evidence="5">
    <location>
        <begin position="191"/>
        <end position="193"/>
    </location>
</feature>
<feature type="helix" evidence="5">
    <location>
        <begin position="196"/>
        <end position="199"/>
    </location>
</feature>
<feature type="helix" evidence="5">
    <location>
        <begin position="200"/>
        <end position="208"/>
    </location>
</feature>
<feature type="helix" evidence="5">
    <location>
        <begin position="216"/>
        <end position="231"/>
    </location>
</feature>
<feature type="strand" evidence="5">
    <location>
        <begin position="236"/>
        <end position="243"/>
    </location>
</feature>
<feature type="strand" evidence="5">
    <location>
        <begin position="245"/>
        <end position="247"/>
    </location>
</feature>
<feature type="helix" evidence="5">
    <location>
        <begin position="249"/>
        <end position="258"/>
    </location>
</feature>
<feature type="strand" evidence="5">
    <location>
        <begin position="262"/>
        <end position="272"/>
    </location>
</feature>
<feature type="helix" evidence="5">
    <location>
        <begin position="274"/>
        <end position="277"/>
    </location>
</feature>
<feature type="helix" evidence="5">
    <location>
        <begin position="279"/>
        <end position="289"/>
    </location>
</feature>
<feature type="helix" evidence="5">
    <location>
        <begin position="291"/>
        <end position="293"/>
    </location>
</feature>
<keyword id="KW-0002">3D-structure</keyword>
<keyword id="KW-0216">Detoxification</keyword>
<keyword id="KW-0378">Hydrolase</keyword>
<keyword id="KW-0614">Plasmid</keyword>
<proteinExistence type="evidence at protein level"/>
<protein>
    <recommendedName>
        <fullName>Haloalkane dehalogenase</fullName>
        <ecNumber>3.8.1.5</ecNumber>
    </recommendedName>
</protein>